<comment type="function">
    <text evidence="1">Catalyzes the conversion of 4-hydroxy-tetrahydrodipicolinate (HTPA) to tetrahydrodipicolinate.</text>
</comment>
<comment type="catalytic activity">
    <reaction evidence="1">
        <text>(S)-2,3,4,5-tetrahydrodipicolinate + NAD(+) + H2O = (2S,4S)-4-hydroxy-2,3,4,5-tetrahydrodipicolinate + NADH + H(+)</text>
        <dbReference type="Rhea" id="RHEA:35323"/>
        <dbReference type="ChEBI" id="CHEBI:15377"/>
        <dbReference type="ChEBI" id="CHEBI:15378"/>
        <dbReference type="ChEBI" id="CHEBI:16845"/>
        <dbReference type="ChEBI" id="CHEBI:57540"/>
        <dbReference type="ChEBI" id="CHEBI:57945"/>
        <dbReference type="ChEBI" id="CHEBI:67139"/>
        <dbReference type="EC" id="1.17.1.8"/>
    </reaction>
</comment>
<comment type="catalytic activity">
    <reaction evidence="1">
        <text>(S)-2,3,4,5-tetrahydrodipicolinate + NADP(+) + H2O = (2S,4S)-4-hydroxy-2,3,4,5-tetrahydrodipicolinate + NADPH + H(+)</text>
        <dbReference type="Rhea" id="RHEA:35331"/>
        <dbReference type="ChEBI" id="CHEBI:15377"/>
        <dbReference type="ChEBI" id="CHEBI:15378"/>
        <dbReference type="ChEBI" id="CHEBI:16845"/>
        <dbReference type="ChEBI" id="CHEBI:57783"/>
        <dbReference type="ChEBI" id="CHEBI:58349"/>
        <dbReference type="ChEBI" id="CHEBI:67139"/>
        <dbReference type="EC" id="1.17.1.8"/>
    </reaction>
</comment>
<comment type="pathway">
    <text evidence="1">Amino-acid biosynthesis; L-lysine biosynthesis via DAP pathway; (S)-tetrahydrodipicolinate from L-aspartate: step 4/4.</text>
</comment>
<comment type="subunit">
    <text evidence="1">Homotetramer.</text>
</comment>
<comment type="subcellular location">
    <subcellularLocation>
        <location evidence="1">Cytoplasm</location>
    </subcellularLocation>
</comment>
<comment type="similarity">
    <text evidence="1">Belongs to the DapB family.</text>
</comment>
<comment type="caution">
    <text evidence="2">Was originally thought to be a dihydrodipicolinate reductase (DHDPR), catalyzing the conversion of dihydrodipicolinate to tetrahydrodipicolinate. However, it was shown in E.coli that the substrate of the enzymatic reaction is not dihydrodipicolinate (DHDP) but in fact (2S,4S)-4-hydroxy-2,3,4,5-tetrahydrodipicolinic acid (HTPA), the product released by the DapA-catalyzed reaction.</text>
</comment>
<keyword id="KW-0028">Amino-acid biosynthesis</keyword>
<keyword id="KW-0963">Cytoplasm</keyword>
<keyword id="KW-0220">Diaminopimelate biosynthesis</keyword>
<keyword id="KW-0457">Lysine biosynthesis</keyword>
<keyword id="KW-0520">NAD</keyword>
<keyword id="KW-0521">NADP</keyword>
<keyword id="KW-0560">Oxidoreductase</keyword>
<evidence type="ECO:0000255" key="1">
    <source>
        <dbReference type="HAMAP-Rule" id="MF_00102"/>
    </source>
</evidence>
<evidence type="ECO:0000305" key="2"/>
<proteinExistence type="inferred from homology"/>
<protein>
    <recommendedName>
        <fullName evidence="1">4-hydroxy-tetrahydrodipicolinate reductase</fullName>
        <shortName evidence="1">HTPA reductase</shortName>
        <ecNumber evidence="1">1.17.1.8</ecNumber>
    </recommendedName>
</protein>
<reference key="1">
    <citation type="journal article" date="2009" name="PLoS Genet.">
        <title>Organised genome dynamics in the Escherichia coli species results in highly diverse adaptive paths.</title>
        <authorList>
            <person name="Touchon M."/>
            <person name="Hoede C."/>
            <person name="Tenaillon O."/>
            <person name="Barbe V."/>
            <person name="Baeriswyl S."/>
            <person name="Bidet P."/>
            <person name="Bingen E."/>
            <person name="Bonacorsi S."/>
            <person name="Bouchier C."/>
            <person name="Bouvet O."/>
            <person name="Calteau A."/>
            <person name="Chiapello H."/>
            <person name="Clermont O."/>
            <person name="Cruveiller S."/>
            <person name="Danchin A."/>
            <person name="Diard M."/>
            <person name="Dossat C."/>
            <person name="Karoui M.E."/>
            <person name="Frapy E."/>
            <person name="Garry L."/>
            <person name="Ghigo J.M."/>
            <person name="Gilles A.M."/>
            <person name="Johnson J."/>
            <person name="Le Bouguenec C."/>
            <person name="Lescat M."/>
            <person name="Mangenot S."/>
            <person name="Martinez-Jehanne V."/>
            <person name="Matic I."/>
            <person name="Nassif X."/>
            <person name="Oztas S."/>
            <person name="Petit M.A."/>
            <person name="Pichon C."/>
            <person name="Rouy Z."/>
            <person name="Ruf C.S."/>
            <person name="Schneider D."/>
            <person name="Tourret J."/>
            <person name="Vacherie B."/>
            <person name="Vallenet D."/>
            <person name="Medigue C."/>
            <person name="Rocha E.P.C."/>
            <person name="Denamur E."/>
        </authorList>
    </citation>
    <scope>NUCLEOTIDE SEQUENCE [LARGE SCALE GENOMIC DNA]</scope>
    <source>
        <strain>ED1a</strain>
    </source>
</reference>
<feature type="chain" id="PRO_1000118855" description="4-hydroxy-tetrahydrodipicolinate reductase">
    <location>
        <begin position="1"/>
        <end position="273"/>
    </location>
</feature>
<feature type="active site" description="Proton donor/acceptor" evidence="1">
    <location>
        <position position="159"/>
    </location>
</feature>
<feature type="active site" description="Proton donor" evidence="1">
    <location>
        <position position="163"/>
    </location>
</feature>
<feature type="binding site" evidence="1">
    <location>
        <begin position="12"/>
        <end position="17"/>
    </location>
    <ligand>
        <name>NAD(+)</name>
        <dbReference type="ChEBI" id="CHEBI:57540"/>
    </ligand>
</feature>
<feature type="binding site" evidence="1">
    <location>
        <position position="38"/>
    </location>
    <ligand>
        <name>NAD(+)</name>
        <dbReference type="ChEBI" id="CHEBI:57540"/>
    </ligand>
</feature>
<feature type="binding site" evidence="1">
    <location>
        <position position="39"/>
    </location>
    <ligand>
        <name>NADP(+)</name>
        <dbReference type="ChEBI" id="CHEBI:58349"/>
    </ligand>
</feature>
<feature type="binding site" evidence="1">
    <location>
        <begin position="102"/>
        <end position="104"/>
    </location>
    <ligand>
        <name>NAD(+)</name>
        <dbReference type="ChEBI" id="CHEBI:57540"/>
    </ligand>
</feature>
<feature type="binding site" evidence="1">
    <location>
        <begin position="126"/>
        <end position="129"/>
    </location>
    <ligand>
        <name>NAD(+)</name>
        <dbReference type="ChEBI" id="CHEBI:57540"/>
    </ligand>
</feature>
<feature type="binding site" evidence="1">
    <location>
        <position position="160"/>
    </location>
    <ligand>
        <name>(S)-2,3,4,5-tetrahydrodipicolinate</name>
        <dbReference type="ChEBI" id="CHEBI:16845"/>
    </ligand>
</feature>
<feature type="binding site" evidence="1">
    <location>
        <begin position="169"/>
        <end position="170"/>
    </location>
    <ligand>
        <name>(S)-2,3,4,5-tetrahydrodipicolinate</name>
        <dbReference type="ChEBI" id="CHEBI:16845"/>
    </ligand>
</feature>
<sequence>MHDANIRVAIAGAGGRMGRQLIQAALALEGVQLGAALEREGSSLLGSDAGELAGAGKTGVTVQSSLDAIKDDFDVFIDFTRPEGTLNHLAFCRQHGKGMVIGTTGFDEAGKQAIRDAAADIAIVFAANFSVGVNVMLKLLEKAAKVMGDYTDIEIIEAHHRHKVDAPSGTALAMGEAIAHALDKDLKDCAVYSREGHTGERVPGTIGFATVRAGDIVGEHTAMFADIGERLEITHKASSRMTFANGAVRSALWLSGKESGLFDMRDVLDLNNL</sequence>
<dbReference type="EC" id="1.17.1.8" evidence="1"/>
<dbReference type="EMBL" id="CU928162">
    <property type="protein sequence ID" value="CAR06252.1"/>
    <property type="molecule type" value="Genomic_DNA"/>
</dbReference>
<dbReference type="RefSeq" id="WP_000543585.1">
    <property type="nucleotide sequence ID" value="NC_011745.1"/>
</dbReference>
<dbReference type="SMR" id="B7MNN7"/>
<dbReference type="KEGG" id="ecq:ECED1_0029"/>
<dbReference type="HOGENOM" id="CLU_047479_2_1_6"/>
<dbReference type="UniPathway" id="UPA00034">
    <property type="reaction ID" value="UER00018"/>
</dbReference>
<dbReference type="Proteomes" id="UP000000748">
    <property type="component" value="Chromosome"/>
</dbReference>
<dbReference type="GO" id="GO:0005829">
    <property type="term" value="C:cytosol"/>
    <property type="evidence" value="ECO:0007669"/>
    <property type="project" value="TreeGrafter"/>
</dbReference>
<dbReference type="GO" id="GO:0008839">
    <property type="term" value="F:4-hydroxy-tetrahydrodipicolinate reductase"/>
    <property type="evidence" value="ECO:0007669"/>
    <property type="project" value="UniProtKB-EC"/>
</dbReference>
<dbReference type="GO" id="GO:0051287">
    <property type="term" value="F:NAD binding"/>
    <property type="evidence" value="ECO:0007669"/>
    <property type="project" value="UniProtKB-UniRule"/>
</dbReference>
<dbReference type="GO" id="GO:0050661">
    <property type="term" value="F:NADP binding"/>
    <property type="evidence" value="ECO:0007669"/>
    <property type="project" value="UniProtKB-UniRule"/>
</dbReference>
<dbReference type="GO" id="GO:0016726">
    <property type="term" value="F:oxidoreductase activity, acting on CH or CH2 groups, NAD or NADP as acceptor"/>
    <property type="evidence" value="ECO:0007669"/>
    <property type="project" value="UniProtKB-UniRule"/>
</dbReference>
<dbReference type="GO" id="GO:0019877">
    <property type="term" value="P:diaminopimelate biosynthetic process"/>
    <property type="evidence" value="ECO:0007669"/>
    <property type="project" value="UniProtKB-UniRule"/>
</dbReference>
<dbReference type="GO" id="GO:0009089">
    <property type="term" value="P:lysine biosynthetic process via diaminopimelate"/>
    <property type="evidence" value="ECO:0007669"/>
    <property type="project" value="UniProtKB-UniRule"/>
</dbReference>
<dbReference type="CDD" id="cd02274">
    <property type="entry name" value="DHDPR_N"/>
    <property type="match status" value="1"/>
</dbReference>
<dbReference type="FunFam" id="3.30.360.10:FF:000004">
    <property type="entry name" value="4-hydroxy-tetrahydrodipicolinate reductase"/>
    <property type="match status" value="1"/>
</dbReference>
<dbReference type="FunFam" id="3.40.50.720:FF:000048">
    <property type="entry name" value="4-hydroxy-tetrahydrodipicolinate reductase"/>
    <property type="match status" value="1"/>
</dbReference>
<dbReference type="Gene3D" id="3.30.360.10">
    <property type="entry name" value="Dihydrodipicolinate Reductase, domain 2"/>
    <property type="match status" value="1"/>
</dbReference>
<dbReference type="Gene3D" id="3.40.50.720">
    <property type="entry name" value="NAD(P)-binding Rossmann-like Domain"/>
    <property type="match status" value="1"/>
</dbReference>
<dbReference type="HAMAP" id="MF_00102">
    <property type="entry name" value="DapB"/>
    <property type="match status" value="1"/>
</dbReference>
<dbReference type="InterPro" id="IPR022663">
    <property type="entry name" value="DapB_C"/>
</dbReference>
<dbReference type="InterPro" id="IPR000846">
    <property type="entry name" value="DapB_N"/>
</dbReference>
<dbReference type="InterPro" id="IPR022664">
    <property type="entry name" value="DapB_N_CS"/>
</dbReference>
<dbReference type="InterPro" id="IPR023940">
    <property type="entry name" value="DHDPR_bac"/>
</dbReference>
<dbReference type="InterPro" id="IPR036291">
    <property type="entry name" value="NAD(P)-bd_dom_sf"/>
</dbReference>
<dbReference type="NCBIfam" id="TIGR00036">
    <property type="entry name" value="dapB"/>
    <property type="match status" value="1"/>
</dbReference>
<dbReference type="PANTHER" id="PTHR20836:SF0">
    <property type="entry name" value="4-HYDROXY-TETRAHYDRODIPICOLINATE REDUCTASE 1, CHLOROPLASTIC-RELATED"/>
    <property type="match status" value="1"/>
</dbReference>
<dbReference type="PANTHER" id="PTHR20836">
    <property type="entry name" value="DIHYDRODIPICOLINATE REDUCTASE"/>
    <property type="match status" value="1"/>
</dbReference>
<dbReference type="Pfam" id="PF05173">
    <property type="entry name" value="DapB_C"/>
    <property type="match status" value="1"/>
</dbReference>
<dbReference type="Pfam" id="PF01113">
    <property type="entry name" value="DapB_N"/>
    <property type="match status" value="1"/>
</dbReference>
<dbReference type="PIRSF" id="PIRSF000161">
    <property type="entry name" value="DHPR"/>
    <property type="match status" value="1"/>
</dbReference>
<dbReference type="SUPFAM" id="SSF55347">
    <property type="entry name" value="Glyceraldehyde-3-phosphate dehydrogenase-like, C-terminal domain"/>
    <property type="match status" value="1"/>
</dbReference>
<dbReference type="SUPFAM" id="SSF51735">
    <property type="entry name" value="NAD(P)-binding Rossmann-fold domains"/>
    <property type="match status" value="1"/>
</dbReference>
<dbReference type="PROSITE" id="PS01298">
    <property type="entry name" value="DAPB"/>
    <property type="match status" value="1"/>
</dbReference>
<name>DAPB_ECO81</name>
<organism>
    <name type="scientific">Escherichia coli O81 (strain ED1a)</name>
    <dbReference type="NCBI Taxonomy" id="585397"/>
    <lineage>
        <taxon>Bacteria</taxon>
        <taxon>Pseudomonadati</taxon>
        <taxon>Pseudomonadota</taxon>
        <taxon>Gammaproteobacteria</taxon>
        <taxon>Enterobacterales</taxon>
        <taxon>Enterobacteriaceae</taxon>
        <taxon>Escherichia</taxon>
    </lineage>
</organism>
<gene>
    <name evidence="1" type="primary">dapB</name>
    <name type="ordered locus">ECED1_0029</name>
</gene>
<accession>B7MNN7</accession>